<keyword id="KW-0963">Cytoplasm</keyword>
<keyword id="KW-0251">Elongation factor</keyword>
<keyword id="KW-0648">Protein biosynthesis</keyword>
<keyword id="KW-1185">Reference proteome</keyword>
<comment type="function">
    <text evidence="1">Associates with the EF-Tu.GDP complex and induces the exchange of GDP to GTP. It remains bound to the aminoacyl-tRNA.EF-Tu.GTP complex up to the GTP hydrolysis stage on the ribosome.</text>
</comment>
<comment type="subcellular location">
    <subcellularLocation>
        <location evidence="1">Cytoplasm</location>
    </subcellularLocation>
</comment>
<comment type="similarity">
    <text evidence="1">Belongs to the EF-Ts family.</text>
</comment>
<protein>
    <recommendedName>
        <fullName evidence="1">Elongation factor Ts</fullName>
        <shortName evidence="1">EF-Ts</shortName>
    </recommendedName>
</protein>
<evidence type="ECO:0000255" key="1">
    <source>
        <dbReference type="HAMAP-Rule" id="MF_00050"/>
    </source>
</evidence>
<evidence type="ECO:0000256" key="2">
    <source>
        <dbReference type="SAM" id="MobiDB-lite"/>
    </source>
</evidence>
<feature type="chain" id="PRO_0000241541" description="Elongation factor Ts">
    <location>
        <begin position="1"/>
        <end position="258"/>
    </location>
</feature>
<feature type="region of interest" description="Involved in Mg(2+) ion dislocation from EF-Tu" evidence="1">
    <location>
        <begin position="81"/>
        <end position="84"/>
    </location>
</feature>
<feature type="region of interest" description="Disordered" evidence="2">
    <location>
        <begin position="216"/>
        <end position="258"/>
    </location>
</feature>
<feature type="compositionally biased region" description="Pro residues" evidence="2">
    <location>
        <begin position="229"/>
        <end position="241"/>
    </location>
</feature>
<feature type="compositionally biased region" description="Basic residues" evidence="2">
    <location>
        <begin position="249"/>
        <end position="258"/>
    </location>
</feature>
<reference key="1">
    <citation type="journal article" date="2007" name="ISME J.">
        <title>Population level functional diversity in a microbial community revealed by comparative genomic and metagenomic analyses.</title>
        <authorList>
            <person name="Bhaya D."/>
            <person name="Grossman A.R."/>
            <person name="Steunou A.-S."/>
            <person name="Khuri N."/>
            <person name="Cohan F.M."/>
            <person name="Hamamura N."/>
            <person name="Melendrez M.C."/>
            <person name="Bateson M.M."/>
            <person name="Ward D.M."/>
            <person name="Heidelberg J.F."/>
        </authorList>
    </citation>
    <scope>NUCLEOTIDE SEQUENCE [LARGE SCALE GENOMIC DNA]</scope>
    <source>
        <strain>JA-2-3B'a(2-13)</strain>
    </source>
</reference>
<organism>
    <name type="scientific">Synechococcus sp. (strain JA-2-3B'a(2-13))</name>
    <name type="common">Cyanobacteria bacterium Yellowstone B-Prime</name>
    <dbReference type="NCBI Taxonomy" id="321332"/>
    <lineage>
        <taxon>Bacteria</taxon>
        <taxon>Bacillati</taxon>
        <taxon>Cyanobacteriota</taxon>
        <taxon>Cyanophyceae</taxon>
        <taxon>Synechococcales</taxon>
        <taxon>Synechococcaceae</taxon>
        <taxon>Synechococcus</taxon>
    </lineage>
</organism>
<proteinExistence type="inferred from homology"/>
<gene>
    <name evidence="1" type="primary">tsf</name>
    <name type="ordered locus">CYB_1535</name>
</gene>
<sequence length="258" mass="28310">MSIDAKLVKELREKTGAGMMDCKKALEDSGGDMEKAITWLRQKGLAGAAKKASRVAAEGAVDSYIHFGNRIGVLVEVNCETDFVARNEDFKKLVQDIAKQIAACQNVEYVSVDQIPAEVVEREKAIEMGKEDLANKPENIREKIVQGRIEKRLKELSLLDQPFIKDSSITVEELVKQHIAKLGENIRVRRFVRFVLGEGIEKEEVDFAAEVAAQAGLKPAEAPKVEETPPAPPEEPAPEPAPAAESKPAKKGSAKKKK</sequence>
<dbReference type="EMBL" id="CP000240">
    <property type="protein sequence ID" value="ABD02499.1"/>
    <property type="molecule type" value="Genomic_DNA"/>
</dbReference>
<dbReference type="SMR" id="Q2JLB2"/>
<dbReference type="STRING" id="321332.CYB_1535"/>
<dbReference type="KEGG" id="cyb:CYB_1535"/>
<dbReference type="eggNOG" id="COG0264">
    <property type="taxonomic scope" value="Bacteria"/>
</dbReference>
<dbReference type="HOGENOM" id="CLU_047155_1_0_3"/>
<dbReference type="OrthoDB" id="9808348at2"/>
<dbReference type="Proteomes" id="UP000001938">
    <property type="component" value="Chromosome"/>
</dbReference>
<dbReference type="GO" id="GO:0005737">
    <property type="term" value="C:cytoplasm"/>
    <property type="evidence" value="ECO:0007669"/>
    <property type="project" value="UniProtKB-SubCell"/>
</dbReference>
<dbReference type="GO" id="GO:0003746">
    <property type="term" value="F:translation elongation factor activity"/>
    <property type="evidence" value="ECO:0007669"/>
    <property type="project" value="UniProtKB-UniRule"/>
</dbReference>
<dbReference type="CDD" id="cd14275">
    <property type="entry name" value="UBA_EF-Ts"/>
    <property type="match status" value="1"/>
</dbReference>
<dbReference type="FunFam" id="1.10.286.20:FF:000001">
    <property type="entry name" value="Elongation factor Ts"/>
    <property type="match status" value="1"/>
</dbReference>
<dbReference type="FunFam" id="1.10.8.10:FF:000001">
    <property type="entry name" value="Elongation factor Ts"/>
    <property type="match status" value="1"/>
</dbReference>
<dbReference type="Gene3D" id="1.10.286.20">
    <property type="match status" value="1"/>
</dbReference>
<dbReference type="Gene3D" id="1.10.8.10">
    <property type="entry name" value="DNA helicase RuvA subunit, C-terminal domain"/>
    <property type="match status" value="1"/>
</dbReference>
<dbReference type="Gene3D" id="3.30.479.20">
    <property type="entry name" value="Elongation factor Ts, dimerisation domain"/>
    <property type="match status" value="1"/>
</dbReference>
<dbReference type="HAMAP" id="MF_00050">
    <property type="entry name" value="EF_Ts"/>
    <property type="match status" value="1"/>
</dbReference>
<dbReference type="InterPro" id="IPR036402">
    <property type="entry name" value="EF-Ts_dimer_sf"/>
</dbReference>
<dbReference type="InterPro" id="IPR001816">
    <property type="entry name" value="Transl_elong_EFTs/EF1B"/>
</dbReference>
<dbReference type="InterPro" id="IPR014039">
    <property type="entry name" value="Transl_elong_EFTs/EF1B_dimer"/>
</dbReference>
<dbReference type="InterPro" id="IPR018101">
    <property type="entry name" value="Transl_elong_Ts_CS"/>
</dbReference>
<dbReference type="InterPro" id="IPR009060">
    <property type="entry name" value="UBA-like_sf"/>
</dbReference>
<dbReference type="NCBIfam" id="TIGR00116">
    <property type="entry name" value="tsf"/>
    <property type="match status" value="1"/>
</dbReference>
<dbReference type="PANTHER" id="PTHR11741">
    <property type="entry name" value="ELONGATION FACTOR TS"/>
    <property type="match status" value="1"/>
</dbReference>
<dbReference type="PANTHER" id="PTHR11741:SF10">
    <property type="entry name" value="POLYPROTEIN OF EF-TS, CHLOROPLASTIC"/>
    <property type="match status" value="1"/>
</dbReference>
<dbReference type="Pfam" id="PF00889">
    <property type="entry name" value="EF_TS"/>
    <property type="match status" value="2"/>
</dbReference>
<dbReference type="SUPFAM" id="SSF54713">
    <property type="entry name" value="Elongation factor Ts (EF-Ts), dimerisation domain"/>
    <property type="match status" value="1"/>
</dbReference>
<dbReference type="SUPFAM" id="SSF46934">
    <property type="entry name" value="UBA-like"/>
    <property type="match status" value="1"/>
</dbReference>
<dbReference type="PROSITE" id="PS01126">
    <property type="entry name" value="EF_TS_1"/>
    <property type="match status" value="1"/>
</dbReference>
<dbReference type="PROSITE" id="PS01127">
    <property type="entry name" value="EF_TS_2"/>
    <property type="match status" value="1"/>
</dbReference>
<accession>Q2JLB2</accession>
<name>EFTS_SYNJB</name>